<dbReference type="EC" id="2.5.1.61" evidence="1"/>
<dbReference type="EMBL" id="AP008229">
    <property type="protein sequence ID" value="BAE70533.1"/>
    <property type="molecule type" value="Genomic_DNA"/>
</dbReference>
<dbReference type="RefSeq" id="WP_011409484.1">
    <property type="nucleotide sequence ID" value="NC_007705.1"/>
</dbReference>
<dbReference type="SMR" id="Q2NYU4"/>
<dbReference type="KEGG" id="xom:XOO3778"/>
<dbReference type="HOGENOM" id="CLU_019704_0_2_6"/>
<dbReference type="UniPathway" id="UPA00251">
    <property type="reaction ID" value="UER00319"/>
</dbReference>
<dbReference type="GO" id="GO:0005737">
    <property type="term" value="C:cytoplasm"/>
    <property type="evidence" value="ECO:0007669"/>
    <property type="project" value="TreeGrafter"/>
</dbReference>
<dbReference type="GO" id="GO:0004418">
    <property type="term" value="F:hydroxymethylbilane synthase activity"/>
    <property type="evidence" value="ECO:0007669"/>
    <property type="project" value="UniProtKB-UniRule"/>
</dbReference>
<dbReference type="GO" id="GO:0006782">
    <property type="term" value="P:protoporphyrinogen IX biosynthetic process"/>
    <property type="evidence" value="ECO:0007669"/>
    <property type="project" value="UniProtKB-UniRule"/>
</dbReference>
<dbReference type="CDD" id="cd13646">
    <property type="entry name" value="PBP2_EcHMBS_like"/>
    <property type="match status" value="1"/>
</dbReference>
<dbReference type="FunFam" id="3.40.190.10:FF:000004">
    <property type="entry name" value="Porphobilinogen deaminase"/>
    <property type="match status" value="1"/>
</dbReference>
<dbReference type="FunFam" id="3.40.190.10:FF:000005">
    <property type="entry name" value="Porphobilinogen deaminase"/>
    <property type="match status" value="1"/>
</dbReference>
<dbReference type="Gene3D" id="3.40.190.10">
    <property type="entry name" value="Periplasmic binding protein-like II"/>
    <property type="match status" value="2"/>
</dbReference>
<dbReference type="Gene3D" id="3.30.160.40">
    <property type="entry name" value="Porphobilinogen deaminase, C-terminal domain"/>
    <property type="match status" value="1"/>
</dbReference>
<dbReference type="HAMAP" id="MF_00260">
    <property type="entry name" value="Porphobil_deam"/>
    <property type="match status" value="1"/>
</dbReference>
<dbReference type="InterPro" id="IPR000860">
    <property type="entry name" value="HemC"/>
</dbReference>
<dbReference type="InterPro" id="IPR022419">
    <property type="entry name" value="Porphobilin_deaminase_cofac_BS"/>
</dbReference>
<dbReference type="InterPro" id="IPR022417">
    <property type="entry name" value="Porphobilin_deaminase_N"/>
</dbReference>
<dbReference type="InterPro" id="IPR022418">
    <property type="entry name" value="Porphobilinogen_deaminase_C"/>
</dbReference>
<dbReference type="InterPro" id="IPR036803">
    <property type="entry name" value="Porphobilinogen_deaminase_C_sf"/>
</dbReference>
<dbReference type="NCBIfam" id="TIGR00212">
    <property type="entry name" value="hemC"/>
    <property type="match status" value="1"/>
</dbReference>
<dbReference type="PANTHER" id="PTHR11557">
    <property type="entry name" value="PORPHOBILINOGEN DEAMINASE"/>
    <property type="match status" value="1"/>
</dbReference>
<dbReference type="PANTHER" id="PTHR11557:SF0">
    <property type="entry name" value="PORPHOBILINOGEN DEAMINASE"/>
    <property type="match status" value="1"/>
</dbReference>
<dbReference type="Pfam" id="PF01379">
    <property type="entry name" value="Porphobil_deam"/>
    <property type="match status" value="1"/>
</dbReference>
<dbReference type="Pfam" id="PF03900">
    <property type="entry name" value="Porphobil_deamC"/>
    <property type="match status" value="1"/>
</dbReference>
<dbReference type="PIRSF" id="PIRSF001438">
    <property type="entry name" value="4pyrrol_synth_OHMeBilane_synth"/>
    <property type="match status" value="1"/>
</dbReference>
<dbReference type="PRINTS" id="PR00151">
    <property type="entry name" value="PORPHBDMNASE"/>
</dbReference>
<dbReference type="SUPFAM" id="SSF53850">
    <property type="entry name" value="Periplasmic binding protein-like II"/>
    <property type="match status" value="1"/>
</dbReference>
<dbReference type="SUPFAM" id="SSF54782">
    <property type="entry name" value="Porphobilinogen deaminase (hydroxymethylbilane synthase), C-terminal domain"/>
    <property type="match status" value="1"/>
</dbReference>
<dbReference type="PROSITE" id="PS00533">
    <property type="entry name" value="PORPHOBILINOGEN_DEAM"/>
    <property type="match status" value="1"/>
</dbReference>
<comment type="function">
    <text evidence="1">Tetrapolymerization of the monopyrrole PBG into the hydroxymethylbilane pre-uroporphyrinogen in several discrete steps.</text>
</comment>
<comment type="catalytic activity">
    <reaction evidence="1">
        <text>4 porphobilinogen + H2O = hydroxymethylbilane + 4 NH4(+)</text>
        <dbReference type="Rhea" id="RHEA:13185"/>
        <dbReference type="ChEBI" id="CHEBI:15377"/>
        <dbReference type="ChEBI" id="CHEBI:28938"/>
        <dbReference type="ChEBI" id="CHEBI:57845"/>
        <dbReference type="ChEBI" id="CHEBI:58126"/>
        <dbReference type="EC" id="2.5.1.61"/>
    </reaction>
</comment>
<comment type="cofactor">
    <cofactor evidence="1">
        <name>dipyrromethane</name>
        <dbReference type="ChEBI" id="CHEBI:60342"/>
    </cofactor>
    <text evidence="1">Binds 1 dipyrromethane group covalently.</text>
</comment>
<comment type="pathway">
    <text evidence="1">Porphyrin-containing compound metabolism; protoporphyrin-IX biosynthesis; coproporphyrinogen-III from 5-aminolevulinate: step 2/4.</text>
</comment>
<comment type="subunit">
    <text evidence="1">Monomer.</text>
</comment>
<comment type="miscellaneous">
    <text evidence="1">The porphobilinogen subunits are added to the dipyrromethane group.</text>
</comment>
<comment type="similarity">
    <text evidence="1">Belongs to the HMBS family.</text>
</comment>
<accession>Q2NYU4</accession>
<name>HEM3_XANOM</name>
<keyword id="KW-0627">Porphyrin biosynthesis</keyword>
<keyword id="KW-0808">Transferase</keyword>
<evidence type="ECO:0000255" key="1">
    <source>
        <dbReference type="HAMAP-Rule" id="MF_00260"/>
    </source>
</evidence>
<protein>
    <recommendedName>
        <fullName evidence="1">Porphobilinogen deaminase</fullName>
        <shortName evidence="1">PBG</shortName>
        <ecNumber evidence="1">2.5.1.61</ecNumber>
    </recommendedName>
    <alternativeName>
        <fullName evidence="1">Hydroxymethylbilane synthase</fullName>
        <shortName evidence="1">HMBS</shortName>
    </alternativeName>
    <alternativeName>
        <fullName evidence="1">Pre-uroporphyrinogen synthase</fullName>
    </alternativeName>
</protein>
<sequence>MTTLRIATRKSPLALWQSEHVAAALRQHHPGLEVVLVPMSTRGDEVLDRSLAAIGGKGLFLKELELAMLRGDADCAVHSFKDVPMELDDPFVLPAILERGDPADALVSNLYASLQALPLGARVGTSSLRRQAQLRAARPDLELIDLRGNVNTRLAKLDNGGYDAIVLACAGLQRLGLDERISARLDAPEWLPAPAQGAVAVECRGDDARIHSLLAVLDAGRTRACVEAERAMNRALHGSCHVPVAALARWEGEGLFLQGMVGSASDGRLIHADAHGSADDTEDLGRRVAQGLFDKGAAQLLAAL</sequence>
<proteinExistence type="inferred from homology"/>
<organism>
    <name type="scientific">Xanthomonas oryzae pv. oryzae (strain MAFF 311018)</name>
    <dbReference type="NCBI Taxonomy" id="342109"/>
    <lineage>
        <taxon>Bacteria</taxon>
        <taxon>Pseudomonadati</taxon>
        <taxon>Pseudomonadota</taxon>
        <taxon>Gammaproteobacteria</taxon>
        <taxon>Lysobacterales</taxon>
        <taxon>Lysobacteraceae</taxon>
        <taxon>Xanthomonas</taxon>
    </lineage>
</organism>
<feature type="chain" id="PRO_0000304295" description="Porphobilinogen deaminase">
    <location>
        <begin position="1"/>
        <end position="304"/>
    </location>
</feature>
<feature type="modified residue" description="S-(dipyrrolylmethanemethyl)cysteine" evidence="1">
    <location>
        <position position="240"/>
    </location>
</feature>
<reference key="1">
    <citation type="journal article" date="2005" name="Jpn. Agric. Res. Q.">
        <title>Genome sequence of Xanthomonas oryzae pv. oryzae suggests contribution of large numbers of effector genes and insertion sequences to its race diversity.</title>
        <authorList>
            <person name="Ochiai H."/>
            <person name="Inoue Y."/>
            <person name="Takeya M."/>
            <person name="Sasaki A."/>
            <person name="Kaku H."/>
        </authorList>
    </citation>
    <scope>NUCLEOTIDE SEQUENCE [LARGE SCALE GENOMIC DNA]</scope>
    <source>
        <strain>MAFF 311018</strain>
    </source>
</reference>
<gene>
    <name evidence="1" type="primary">hemC</name>
    <name type="ordered locus">XOO3778</name>
</gene>